<keyword id="KW-1003">Cell membrane</keyword>
<keyword id="KW-0249">Electron transport</keyword>
<keyword id="KW-0349">Heme</keyword>
<keyword id="KW-0408">Iron</keyword>
<keyword id="KW-0472">Membrane</keyword>
<keyword id="KW-0479">Metal-binding</keyword>
<keyword id="KW-0602">Photosynthesis</keyword>
<keyword id="KW-0812">Transmembrane</keyword>
<keyword id="KW-1133">Transmembrane helix</keyword>
<keyword id="KW-0813">Transport</keyword>
<reference key="1">
    <citation type="journal article" date="1998" name="Proc. Natl. Acad. Sci. U.S.A.">
        <title>Tracking molecular evolution of photosynthesis by characterization of a major photosynthesis gene cluster from Heliobacillus mobilis.</title>
        <authorList>
            <person name="Xiong J."/>
            <person name="Inoue K."/>
            <person name="Bauer C.E."/>
        </authorList>
    </citation>
    <scope>NUCLEOTIDE SEQUENCE [GENOMIC DNA]</scope>
</reference>
<name>CYB6_HELMO</name>
<feature type="chain" id="PRO_0000061840" description="Cytochrome b6">
    <location>
        <begin position="1"/>
        <end position="213"/>
    </location>
</feature>
<feature type="transmembrane region" description="Helical" evidence="1">
    <location>
        <begin position="30"/>
        <end position="50"/>
    </location>
</feature>
<feature type="transmembrane region" description="Helical" evidence="1">
    <location>
        <begin position="88"/>
        <end position="108"/>
    </location>
</feature>
<feature type="transmembrane region" description="Helical" evidence="1">
    <location>
        <begin position="114"/>
        <end position="134"/>
    </location>
</feature>
<feature type="transmembrane region" description="Helical" evidence="1">
    <location>
        <begin position="184"/>
        <end position="204"/>
    </location>
</feature>
<feature type="binding site" description="covalent" evidence="1">
    <location>
        <position position="33"/>
    </location>
    <ligand>
        <name>heme c</name>
        <dbReference type="ChEBI" id="CHEBI:61717"/>
    </ligand>
</feature>
<feature type="binding site" description="axial binding residue" evidence="1">
    <location>
        <position position="84"/>
    </location>
    <ligand>
        <name>heme b</name>
        <dbReference type="ChEBI" id="CHEBI:60344"/>
        <label>2</label>
    </ligand>
    <ligandPart>
        <name>Fe</name>
        <dbReference type="ChEBI" id="CHEBI:18248"/>
    </ligandPart>
</feature>
<feature type="binding site" description="axial binding residue" evidence="1">
    <location>
        <position position="98"/>
    </location>
    <ligand>
        <name>heme b</name>
        <dbReference type="ChEBI" id="CHEBI:60344"/>
        <label>1</label>
    </ligand>
    <ligandPart>
        <name>Fe</name>
        <dbReference type="ChEBI" id="CHEBI:18248"/>
    </ligandPart>
</feature>
<feature type="binding site" description="axial binding residue" evidence="1">
    <location>
        <position position="185"/>
    </location>
    <ligand>
        <name>heme b</name>
        <dbReference type="ChEBI" id="CHEBI:60344"/>
        <label>2</label>
    </ligand>
    <ligandPart>
        <name>Fe</name>
        <dbReference type="ChEBI" id="CHEBI:18248"/>
    </ligandPart>
</feature>
<feature type="binding site" description="axial binding residue" evidence="1">
    <location>
        <position position="200"/>
    </location>
    <ligand>
        <name>heme b</name>
        <dbReference type="ChEBI" id="CHEBI:60344"/>
        <label>1</label>
    </ligand>
    <ligandPart>
        <name>Fe</name>
        <dbReference type="ChEBI" id="CHEBI:18248"/>
    </ligandPart>
</feature>
<dbReference type="EMBL" id="AF080002">
    <property type="protein sequence ID" value="AAC84019.1"/>
    <property type="molecule type" value="Genomic_DNA"/>
</dbReference>
<dbReference type="PIR" id="T31447">
    <property type="entry name" value="T31447"/>
</dbReference>
<dbReference type="RefSeq" id="WP_155475583.1">
    <property type="nucleotide sequence ID" value="NZ_WNKU01000004.1"/>
</dbReference>
<dbReference type="SMR" id="Q9ZGG0"/>
<dbReference type="OrthoDB" id="9804503at2"/>
<dbReference type="GO" id="GO:0005886">
    <property type="term" value="C:plasma membrane"/>
    <property type="evidence" value="ECO:0007669"/>
    <property type="project" value="UniProtKB-SubCell"/>
</dbReference>
<dbReference type="GO" id="GO:0045158">
    <property type="term" value="F:electron transporter, transferring electrons within cytochrome b6/f complex of photosystem II activity"/>
    <property type="evidence" value="ECO:0007669"/>
    <property type="project" value="UniProtKB-UniRule"/>
</dbReference>
<dbReference type="GO" id="GO:0046872">
    <property type="term" value="F:metal ion binding"/>
    <property type="evidence" value="ECO:0007669"/>
    <property type="project" value="UniProtKB-KW"/>
</dbReference>
<dbReference type="GO" id="GO:0016491">
    <property type="term" value="F:oxidoreductase activity"/>
    <property type="evidence" value="ECO:0007669"/>
    <property type="project" value="InterPro"/>
</dbReference>
<dbReference type="GO" id="GO:0015979">
    <property type="term" value="P:photosynthesis"/>
    <property type="evidence" value="ECO:0007669"/>
    <property type="project" value="UniProtKB-UniRule"/>
</dbReference>
<dbReference type="GO" id="GO:0022904">
    <property type="term" value="P:respiratory electron transport chain"/>
    <property type="evidence" value="ECO:0007669"/>
    <property type="project" value="InterPro"/>
</dbReference>
<dbReference type="CDD" id="cd00284">
    <property type="entry name" value="Cytochrome_b_N"/>
    <property type="match status" value="1"/>
</dbReference>
<dbReference type="Gene3D" id="1.20.810.10">
    <property type="entry name" value="Cytochrome Bc1 Complex, Chain C"/>
    <property type="match status" value="1"/>
</dbReference>
<dbReference type="HAMAP" id="MF_00633">
    <property type="entry name" value="Cytb6_f_cytb6"/>
    <property type="match status" value="1"/>
</dbReference>
<dbReference type="InterPro" id="IPR005797">
    <property type="entry name" value="Cyt_b/b6_N"/>
</dbReference>
<dbReference type="InterPro" id="IPR023530">
    <property type="entry name" value="Cyt_B6_PetB"/>
</dbReference>
<dbReference type="InterPro" id="IPR027387">
    <property type="entry name" value="Cytb/b6-like_sf"/>
</dbReference>
<dbReference type="InterPro" id="IPR048259">
    <property type="entry name" value="Cytochrome_b_N_euk/bac"/>
</dbReference>
<dbReference type="InterPro" id="IPR016174">
    <property type="entry name" value="Di-haem_cyt_TM"/>
</dbReference>
<dbReference type="PANTHER" id="PTHR19271">
    <property type="entry name" value="CYTOCHROME B"/>
    <property type="match status" value="1"/>
</dbReference>
<dbReference type="PANTHER" id="PTHR19271:SF16">
    <property type="entry name" value="CYTOCHROME B"/>
    <property type="match status" value="1"/>
</dbReference>
<dbReference type="Pfam" id="PF00033">
    <property type="entry name" value="Cytochrome_B"/>
    <property type="match status" value="1"/>
</dbReference>
<dbReference type="PIRSF" id="PIRSF000032">
    <property type="entry name" value="Cytochrome_b6"/>
    <property type="match status" value="1"/>
</dbReference>
<dbReference type="SUPFAM" id="SSF81342">
    <property type="entry name" value="Transmembrane di-heme cytochromes"/>
    <property type="match status" value="1"/>
</dbReference>
<dbReference type="PROSITE" id="PS51002">
    <property type="entry name" value="CYTB_NTER"/>
    <property type="match status" value="1"/>
</dbReference>
<protein>
    <recommendedName>
        <fullName evidence="1">Cytochrome b6</fullName>
    </recommendedName>
</protein>
<organism>
    <name type="scientific">Heliobacterium mobile</name>
    <name type="common">Heliobacillus mobilis</name>
    <dbReference type="NCBI Taxonomy" id="28064"/>
    <lineage>
        <taxon>Bacteria</taxon>
        <taxon>Bacillati</taxon>
        <taxon>Bacillota</taxon>
        <taxon>Clostridia</taxon>
        <taxon>Eubacteriales</taxon>
        <taxon>Heliobacteriaceae</taxon>
        <taxon>Heliobacterium</taxon>
    </lineage>
</organism>
<gene>
    <name evidence="1" type="primary">petB</name>
    <name evidence="1" type="synonym">cytB</name>
</gene>
<evidence type="ECO:0000255" key="1">
    <source>
        <dbReference type="HAMAP-Rule" id="MF_00633"/>
    </source>
</evidence>
<comment type="function">
    <text evidence="1">Component of the cytochrome bc complex which donates electrons to the photosynthetic reaction center.</text>
</comment>
<comment type="cofactor">
    <cofactor evidence="1">
        <name>heme b</name>
        <dbReference type="ChEBI" id="CHEBI:60344"/>
    </cofactor>
    <text evidence="1">Binds 2 heme b groups non-covalently with two histidine residues as axial ligands.</text>
</comment>
<comment type="cofactor">
    <cofactor evidence="1">
        <name>heme c</name>
        <dbReference type="ChEBI" id="CHEBI:61717"/>
    </cofactor>
    <text evidence="1">Binds one heme group covalently by a single cysteine link with no axial amino acid ligand. This heme was named heme ci.</text>
</comment>
<comment type="subunit">
    <text evidence="1">The subunits of the cytochrome bc complex are a Rieske Fe-S protein (PetC), cytochrome b6 (PetB), subunit IV (PetD), and a diheme cytochrome c (PetX).</text>
</comment>
<comment type="subcellular location">
    <subcellularLocation>
        <location evidence="1">Cell membrane</location>
        <topology evidence="1">Multi-pass membrane protein</topology>
    </subcellularLocation>
</comment>
<comment type="miscellaneous">
    <text evidence="1">Heme 1 (or BH or b566) is high-potential and absorbs at about 566 nm, and heme 2 (or BL or b562) is low-potential and absorbs at about 562 nm.</text>
</comment>
<comment type="similarity">
    <text evidence="1">Belongs to the cytochrome b family. PetB subfamily.</text>
</comment>
<accession>Q9ZGG0</accession>
<sequence length="213" mass="23712">MNWLEERLPGIGKVAEDIAEHPVPSHTLNIFYCLGGLTLLAFLVQCVTGLFLALYYKPTPEAAFASVQMITNEVRFGATIRSLHHWAANLMILLVFLHMLRVYYTGSFKKPRELNWLAGCFLLVLSLGLAFTGYLLPYEQLSYWASVIGAETAGSLPVVGATMKIMMQGGIKVTAEMLSRFYVLHVMILPLVTIGFLVAHFIMIRVQGISDPM</sequence>
<proteinExistence type="inferred from homology"/>